<keyword id="KW-0030">Aminoacyl-tRNA synthetase</keyword>
<keyword id="KW-0067">ATP-binding</keyword>
<keyword id="KW-0963">Cytoplasm</keyword>
<keyword id="KW-0436">Ligase</keyword>
<keyword id="KW-0547">Nucleotide-binding</keyword>
<keyword id="KW-0648">Protein biosynthesis</keyword>
<keyword id="KW-1185">Reference proteome</keyword>
<proteinExistence type="inferred from homology"/>
<accession>Q0RBM4</accession>
<name>SYP_FRAAA</name>
<sequence length="468" mass="50965">MAVLTSRATDFPRWYQDVLAKAELADNGPVRGTMVIRPYGYAIWERMQADVDARIKAAGAVNAYFPLFIPESYLRREAEHVEGFSPELAVVTIGGGKELEEPVVVRPTSETIIGEYLAKWTQSYRDLPLLLNQWANVVRWELRPRLFLRSSEFLWQEGHTAHVDEAEAAAYARRIALEVYRDFLTDVLAIPVFIGTKTRKERFAGATNTMTCEGMMGDGKALQMATSHELGQNFARAFDIDFLGADGAKHLAWTTSWGSSTRMVGGLIMAHGDDNGLRIPPRLAPTQVVVLPVRDDETVVAKAREIAAALTDAGLRVQVDARSGLSFGRRVTDAEIKGIPVRVEVGPRDLAAGNVTLVRRDTSVKAAVPLAEAAARVPALLDEVQAGLHAEALALRESRTADVTTVADAAAAAQTGFARIPWRLVGEEGEARLAEDALTVRCLQTPDGEIPPAGGDPDDLICLIARSY</sequence>
<reference key="1">
    <citation type="journal article" date="2007" name="Genome Res.">
        <title>Genome characteristics of facultatively symbiotic Frankia sp. strains reflect host range and host plant biogeography.</title>
        <authorList>
            <person name="Normand P."/>
            <person name="Lapierre P."/>
            <person name="Tisa L.S."/>
            <person name="Gogarten J.P."/>
            <person name="Alloisio N."/>
            <person name="Bagnarol E."/>
            <person name="Bassi C.A."/>
            <person name="Berry A.M."/>
            <person name="Bickhart D.M."/>
            <person name="Choisne N."/>
            <person name="Couloux A."/>
            <person name="Cournoyer B."/>
            <person name="Cruveiller S."/>
            <person name="Daubin V."/>
            <person name="Demange N."/>
            <person name="Francino M.P."/>
            <person name="Goltsman E."/>
            <person name="Huang Y."/>
            <person name="Kopp O.R."/>
            <person name="Labarre L."/>
            <person name="Lapidus A."/>
            <person name="Lavire C."/>
            <person name="Marechal J."/>
            <person name="Martinez M."/>
            <person name="Mastronunzio J.E."/>
            <person name="Mullin B.C."/>
            <person name="Niemann J."/>
            <person name="Pujic P."/>
            <person name="Rawnsley T."/>
            <person name="Rouy Z."/>
            <person name="Schenowitz C."/>
            <person name="Sellstedt A."/>
            <person name="Tavares F."/>
            <person name="Tomkins J.P."/>
            <person name="Vallenet D."/>
            <person name="Valverde C."/>
            <person name="Wall L.G."/>
            <person name="Wang Y."/>
            <person name="Medigue C."/>
            <person name="Benson D.R."/>
        </authorList>
    </citation>
    <scope>NUCLEOTIDE SEQUENCE [LARGE SCALE GENOMIC DNA]</scope>
    <source>
        <strain>DSM 45986 / CECT 9034 / ACN14a</strain>
    </source>
</reference>
<comment type="function">
    <text evidence="1">Catalyzes the attachment of proline to tRNA(Pro) in a two-step reaction: proline is first activated by ATP to form Pro-AMP and then transferred to the acceptor end of tRNA(Pro).</text>
</comment>
<comment type="catalytic activity">
    <reaction evidence="1">
        <text>tRNA(Pro) + L-proline + ATP = L-prolyl-tRNA(Pro) + AMP + diphosphate</text>
        <dbReference type="Rhea" id="RHEA:14305"/>
        <dbReference type="Rhea" id="RHEA-COMP:9700"/>
        <dbReference type="Rhea" id="RHEA-COMP:9702"/>
        <dbReference type="ChEBI" id="CHEBI:30616"/>
        <dbReference type="ChEBI" id="CHEBI:33019"/>
        <dbReference type="ChEBI" id="CHEBI:60039"/>
        <dbReference type="ChEBI" id="CHEBI:78442"/>
        <dbReference type="ChEBI" id="CHEBI:78532"/>
        <dbReference type="ChEBI" id="CHEBI:456215"/>
        <dbReference type="EC" id="6.1.1.15"/>
    </reaction>
</comment>
<comment type="subunit">
    <text evidence="1">Homodimer.</text>
</comment>
<comment type="subcellular location">
    <subcellularLocation>
        <location evidence="1">Cytoplasm</location>
    </subcellularLocation>
</comment>
<comment type="domain">
    <text evidence="1">Consists of three domains: the N-terminal catalytic domain, the anticodon-binding domain and the C-terminal extension.</text>
</comment>
<comment type="similarity">
    <text evidence="1">Belongs to the class-II aminoacyl-tRNA synthetase family. ProS type 3 subfamily.</text>
</comment>
<feature type="chain" id="PRO_0000288410" description="Proline--tRNA ligase">
    <location>
        <begin position="1"/>
        <end position="468"/>
    </location>
</feature>
<protein>
    <recommendedName>
        <fullName evidence="1">Proline--tRNA ligase</fullName>
        <ecNumber evidence="1">6.1.1.15</ecNumber>
    </recommendedName>
    <alternativeName>
        <fullName evidence="1">Prolyl-tRNA synthetase</fullName>
        <shortName evidence="1">ProRS</shortName>
    </alternativeName>
</protein>
<evidence type="ECO:0000255" key="1">
    <source>
        <dbReference type="HAMAP-Rule" id="MF_01571"/>
    </source>
</evidence>
<organism>
    <name type="scientific">Frankia alni (strain DSM 45986 / CECT 9034 / ACN14a)</name>
    <dbReference type="NCBI Taxonomy" id="326424"/>
    <lineage>
        <taxon>Bacteria</taxon>
        <taxon>Bacillati</taxon>
        <taxon>Actinomycetota</taxon>
        <taxon>Actinomycetes</taxon>
        <taxon>Frankiales</taxon>
        <taxon>Frankiaceae</taxon>
        <taxon>Frankia</taxon>
    </lineage>
</organism>
<gene>
    <name evidence="1" type="primary">proS</name>
    <name type="ordered locus">FRAAL6537</name>
</gene>
<dbReference type="EC" id="6.1.1.15" evidence="1"/>
<dbReference type="EMBL" id="CT573213">
    <property type="protein sequence ID" value="CAJ65160.1"/>
    <property type="molecule type" value="Genomic_DNA"/>
</dbReference>
<dbReference type="RefSeq" id="WP_011607577.1">
    <property type="nucleotide sequence ID" value="NC_008278.1"/>
</dbReference>
<dbReference type="SMR" id="Q0RBM4"/>
<dbReference type="STRING" id="326424.FRAAL6537"/>
<dbReference type="KEGG" id="fal:FRAAL6537"/>
<dbReference type="eggNOG" id="COG0442">
    <property type="taxonomic scope" value="Bacteria"/>
</dbReference>
<dbReference type="HOGENOM" id="CLU_001882_4_2_11"/>
<dbReference type="OrthoDB" id="9809052at2"/>
<dbReference type="Proteomes" id="UP000000657">
    <property type="component" value="Chromosome"/>
</dbReference>
<dbReference type="GO" id="GO:0017101">
    <property type="term" value="C:aminoacyl-tRNA synthetase multienzyme complex"/>
    <property type="evidence" value="ECO:0007669"/>
    <property type="project" value="TreeGrafter"/>
</dbReference>
<dbReference type="GO" id="GO:0005737">
    <property type="term" value="C:cytoplasm"/>
    <property type="evidence" value="ECO:0007669"/>
    <property type="project" value="UniProtKB-SubCell"/>
</dbReference>
<dbReference type="GO" id="GO:0005524">
    <property type="term" value="F:ATP binding"/>
    <property type="evidence" value="ECO:0007669"/>
    <property type="project" value="UniProtKB-UniRule"/>
</dbReference>
<dbReference type="GO" id="GO:0004827">
    <property type="term" value="F:proline-tRNA ligase activity"/>
    <property type="evidence" value="ECO:0007669"/>
    <property type="project" value="UniProtKB-UniRule"/>
</dbReference>
<dbReference type="GO" id="GO:0006433">
    <property type="term" value="P:prolyl-tRNA aminoacylation"/>
    <property type="evidence" value="ECO:0007669"/>
    <property type="project" value="UniProtKB-UniRule"/>
</dbReference>
<dbReference type="CDD" id="cd00778">
    <property type="entry name" value="ProRS_core_arch_euk"/>
    <property type="match status" value="1"/>
</dbReference>
<dbReference type="FunFam" id="3.30.930.10:FF:000037">
    <property type="entry name" value="Proline--tRNA ligase"/>
    <property type="match status" value="1"/>
</dbReference>
<dbReference type="Gene3D" id="3.40.50.800">
    <property type="entry name" value="Anticodon-binding domain"/>
    <property type="match status" value="1"/>
</dbReference>
<dbReference type="Gene3D" id="3.30.930.10">
    <property type="entry name" value="Bira Bifunctional Protein, Domain 2"/>
    <property type="match status" value="1"/>
</dbReference>
<dbReference type="HAMAP" id="MF_01571">
    <property type="entry name" value="Pro_tRNA_synth_type3"/>
    <property type="match status" value="1"/>
</dbReference>
<dbReference type="InterPro" id="IPR002314">
    <property type="entry name" value="aa-tRNA-synt_IIb"/>
</dbReference>
<dbReference type="InterPro" id="IPR006195">
    <property type="entry name" value="aa-tRNA-synth_II"/>
</dbReference>
<dbReference type="InterPro" id="IPR045864">
    <property type="entry name" value="aa-tRNA-synth_II/BPL/LPL"/>
</dbReference>
<dbReference type="InterPro" id="IPR004154">
    <property type="entry name" value="Anticodon-bd"/>
</dbReference>
<dbReference type="InterPro" id="IPR036621">
    <property type="entry name" value="Anticodon-bd_dom_sf"/>
</dbReference>
<dbReference type="InterPro" id="IPR002316">
    <property type="entry name" value="Pro-tRNA-ligase_IIa"/>
</dbReference>
<dbReference type="InterPro" id="IPR004499">
    <property type="entry name" value="Pro-tRNA-ligase_IIa_arc-type"/>
</dbReference>
<dbReference type="InterPro" id="IPR016061">
    <property type="entry name" value="Pro-tRNA_ligase_II_C"/>
</dbReference>
<dbReference type="InterPro" id="IPR033721">
    <property type="entry name" value="ProRS_core_arch_euk"/>
</dbReference>
<dbReference type="NCBIfam" id="TIGR00408">
    <property type="entry name" value="proS_fam_I"/>
    <property type="match status" value="1"/>
</dbReference>
<dbReference type="PANTHER" id="PTHR43382:SF3">
    <property type="entry name" value="PROLINE--TRNA LIGASE, CHLOROPLASTIC_MITOCHONDRIAL"/>
    <property type="match status" value="1"/>
</dbReference>
<dbReference type="PANTHER" id="PTHR43382">
    <property type="entry name" value="PROLYL-TRNA SYNTHETASE"/>
    <property type="match status" value="1"/>
</dbReference>
<dbReference type="Pfam" id="PF03129">
    <property type="entry name" value="HGTP_anticodon"/>
    <property type="match status" value="1"/>
</dbReference>
<dbReference type="Pfam" id="PF00587">
    <property type="entry name" value="tRNA-synt_2b"/>
    <property type="match status" value="1"/>
</dbReference>
<dbReference type="PRINTS" id="PR01046">
    <property type="entry name" value="TRNASYNTHPRO"/>
</dbReference>
<dbReference type="SMART" id="SM00946">
    <property type="entry name" value="ProRS-C_1"/>
    <property type="match status" value="1"/>
</dbReference>
<dbReference type="SUPFAM" id="SSF52954">
    <property type="entry name" value="Class II aaRS ABD-related"/>
    <property type="match status" value="1"/>
</dbReference>
<dbReference type="SUPFAM" id="SSF55681">
    <property type="entry name" value="Class II aaRS and biotin synthetases"/>
    <property type="match status" value="1"/>
</dbReference>
<dbReference type="PROSITE" id="PS50862">
    <property type="entry name" value="AA_TRNA_LIGASE_II"/>
    <property type="match status" value="1"/>
</dbReference>